<proteinExistence type="inferred from homology"/>
<name>VELC_MYCMD</name>
<comment type="function">
    <text evidence="3">Velvet-domain-containing protein not required for disease or sexual development on seedlings (PubMed:24064149).</text>
</comment>
<comment type="subcellular location">
    <subcellularLocation>
        <location evidence="5">Nucleus</location>
    </subcellularLocation>
</comment>
<comment type="similarity">
    <text evidence="5">Belongs to the velvet family. VelC subfamily.</text>
</comment>
<keyword id="KW-0539">Nucleus</keyword>
<keyword id="KW-1185">Reference proteome</keyword>
<keyword id="KW-0804">Transcription</keyword>
<keyword id="KW-0805">Transcription regulation</keyword>
<accession>A0A0D1C1H8</accession>
<gene>
    <name evidence="4" type="primary">umv3</name>
    <name type="ORF">UMAG_04203</name>
</gene>
<evidence type="ECO:0000255" key="1">
    <source>
        <dbReference type="PROSITE-ProRule" id="PRU01165"/>
    </source>
</evidence>
<evidence type="ECO:0000256" key="2">
    <source>
        <dbReference type="SAM" id="MobiDB-lite"/>
    </source>
</evidence>
<evidence type="ECO:0000269" key="3">
    <source>
    </source>
</evidence>
<evidence type="ECO:0000303" key="4">
    <source>
    </source>
</evidence>
<evidence type="ECO:0000305" key="5"/>
<protein>
    <recommendedName>
        <fullName evidence="5">Sexual development regulator umv3</fullName>
    </recommendedName>
</protein>
<organism>
    <name type="scientific">Mycosarcoma maydis</name>
    <name type="common">Corn smut fungus</name>
    <name type="synonym">Ustilago maydis</name>
    <dbReference type="NCBI Taxonomy" id="5270"/>
    <lineage>
        <taxon>Eukaryota</taxon>
        <taxon>Fungi</taxon>
        <taxon>Dikarya</taxon>
        <taxon>Basidiomycota</taxon>
        <taxon>Ustilaginomycotina</taxon>
        <taxon>Ustilaginomycetes</taxon>
        <taxon>Ustilaginales</taxon>
        <taxon>Ustilaginaceae</taxon>
        <taxon>Mycosarcoma</taxon>
    </lineage>
</organism>
<feature type="chain" id="PRO_0000435918" description="Sexual development regulator umv3">
    <location>
        <begin position="1"/>
        <end position="412"/>
    </location>
</feature>
<feature type="domain" description="Velvet" evidence="1">
    <location>
        <begin position="195"/>
        <end position="388"/>
    </location>
</feature>
<feature type="region of interest" description="Disordered" evidence="2">
    <location>
        <begin position="1"/>
        <end position="197"/>
    </location>
</feature>
<feature type="compositionally biased region" description="Polar residues" evidence="2">
    <location>
        <begin position="73"/>
        <end position="93"/>
    </location>
</feature>
<feature type="compositionally biased region" description="Polar residues" evidence="2">
    <location>
        <begin position="149"/>
        <end position="170"/>
    </location>
</feature>
<feature type="compositionally biased region" description="Basic and acidic residues" evidence="2">
    <location>
        <begin position="171"/>
        <end position="181"/>
    </location>
</feature>
<dbReference type="EMBL" id="CM003151">
    <property type="protein sequence ID" value="KIS67702.1"/>
    <property type="molecule type" value="Genomic_DNA"/>
</dbReference>
<dbReference type="RefSeq" id="XP_011390687.1">
    <property type="nucleotide sequence ID" value="XM_011392385.1"/>
</dbReference>
<dbReference type="SMR" id="A0A0D1C1H8"/>
<dbReference type="EnsemblFungi" id="KIS67702">
    <property type="protein sequence ID" value="KIS67702"/>
    <property type="gene ID" value="UMAG_04203"/>
</dbReference>
<dbReference type="GeneID" id="23564458"/>
<dbReference type="KEGG" id="uma:UMAG_04203"/>
<dbReference type="VEuPathDB" id="FungiDB:UMAG_04203"/>
<dbReference type="eggNOG" id="ENOG502RYR6">
    <property type="taxonomic scope" value="Eukaryota"/>
</dbReference>
<dbReference type="InParanoid" id="A0A0D1C1H8"/>
<dbReference type="OMA" id="ENGEDGC"/>
<dbReference type="OrthoDB" id="1746739at2759"/>
<dbReference type="Proteomes" id="UP000000561">
    <property type="component" value="Chromosome 12"/>
</dbReference>
<dbReference type="GO" id="GO:0005634">
    <property type="term" value="C:nucleus"/>
    <property type="evidence" value="ECO:0000318"/>
    <property type="project" value="GO_Central"/>
</dbReference>
<dbReference type="GO" id="GO:0030435">
    <property type="term" value="P:sporulation resulting in formation of a cellular spore"/>
    <property type="evidence" value="ECO:0000318"/>
    <property type="project" value="GO_Central"/>
</dbReference>
<dbReference type="GO" id="GO:0005992">
    <property type="term" value="P:trehalose biosynthetic process"/>
    <property type="evidence" value="ECO:0000318"/>
    <property type="project" value="GO_Central"/>
</dbReference>
<dbReference type="Gene3D" id="2.60.40.3960">
    <property type="entry name" value="Velvet domain"/>
    <property type="match status" value="1"/>
</dbReference>
<dbReference type="InterPro" id="IPR021740">
    <property type="entry name" value="Velvet"/>
</dbReference>
<dbReference type="InterPro" id="IPR037525">
    <property type="entry name" value="Velvet_dom"/>
</dbReference>
<dbReference type="InterPro" id="IPR038491">
    <property type="entry name" value="Velvet_dom_sf"/>
</dbReference>
<dbReference type="PANTHER" id="PTHR33572">
    <property type="entry name" value="SPORE DEVELOPMENT REGULATOR VOSA"/>
    <property type="match status" value="1"/>
</dbReference>
<dbReference type="PANTHER" id="PTHR33572:SF3">
    <property type="entry name" value="VELVET COMPLEX SUBUNIT B"/>
    <property type="match status" value="1"/>
</dbReference>
<dbReference type="Pfam" id="PF11754">
    <property type="entry name" value="Velvet"/>
    <property type="match status" value="2"/>
</dbReference>
<dbReference type="PROSITE" id="PS51821">
    <property type="entry name" value="VELVET"/>
    <property type="match status" value="1"/>
</dbReference>
<sequence>MSAQDDIDTGASNQPRSVVETDQQRAAVVGPRPPRHGEAECTDAIPARDSYQRYDTEVVDVPSMRPPVLPPSRANTLSKQQPRGDLSQSSASSHLPGLRQFTRLAPANMQGKDRSGLLSDRPSGLLLSDHTPNSQHAHRSAPQRDDNGRQSAASNRLSDTNSSAPSPGSTENERVRMHDQRTAPSAPPPLLSDLPRHSTDNKTYRLIIRQQPKQGRLCGLGSKDKRPLDPLPILQLRIIRPDGTEDEDAENSSNLVLQVSLCKEDPITGGYTDAVLVETNDPSYPWTRMLEGRIVASANLARDLDGSRACFFVFTDLSIRQEGQFRLAFKLLALSPPGQVPASAGGHVLTEALTEPFTIYSPRRFPGMTESTDLAKCLARQGIQVPVRNDIRKKQEHLDSLTASTDDMNGLE</sequence>
<reference key="1">
    <citation type="journal article" date="2006" name="Nature">
        <title>Insights from the genome of the biotrophic fungal plant pathogen Ustilago maydis.</title>
        <authorList>
            <person name="Kaemper J."/>
            <person name="Kahmann R."/>
            <person name="Boelker M."/>
            <person name="Ma L.-J."/>
            <person name="Brefort T."/>
            <person name="Saville B.J."/>
            <person name="Banuett F."/>
            <person name="Kronstad J.W."/>
            <person name="Gold S.E."/>
            <person name="Mueller O."/>
            <person name="Perlin M.H."/>
            <person name="Woesten H.A.B."/>
            <person name="de Vries R."/>
            <person name="Ruiz-Herrera J."/>
            <person name="Reynaga-Pena C.G."/>
            <person name="Snetselaar K."/>
            <person name="McCann M."/>
            <person name="Perez-Martin J."/>
            <person name="Feldbruegge M."/>
            <person name="Basse C.W."/>
            <person name="Steinberg G."/>
            <person name="Ibeas J.I."/>
            <person name="Holloman W."/>
            <person name="Guzman P."/>
            <person name="Farman M.L."/>
            <person name="Stajich J.E."/>
            <person name="Sentandreu R."/>
            <person name="Gonzalez-Prieto J.M."/>
            <person name="Kennell J.C."/>
            <person name="Molina L."/>
            <person name="Schirawski J."/>
            <person name="Mendoza-Mendoza A."/>
            <person name="Greilinger D."/>
            <person name="Muench K."/>
            <person name="Roessel N."/>
            <person name="Scherer M."/>
            <person name="Vranes M."/>
            <person name="Ladendorf O."/>
            <person name="Vincon V."/>
            <person name="Fuchs U."/>
            <person name="Sandrock B."/>
            <person name="Meng S."/>
            <person name="Ho E.C.H."/>
            <person name="Cahill M.J."/>
            <person name="Boyce K.J."/>
            <person name="Klose J."/>
            <person name="Klosterman S.J."/>
            <person name="Deelstra H.J."/>
            <person name="Ortiz-Castellanos L."/>
            <person name="Li W."/>
            <person name="Sanchez-Alonso P."/>
            <person name="Schreier P.H."/>
            <person name="Haeuser-Hahn I."/>
            <person name="Vaupel M."/>
            <person name="Koopmann E."/>
            <person name="Friedrich G."/>
            <person name="Voss H."/>
            <person name="Schlueter T."/>
            <person name="Margolis J."/>
            <person name="Platt D."/>
            <person name="Swimmer C."/>
            <person name="Gnirke A."/>
            <person name="Chen F."/>
            <person name="Vysotskaia V."/>
            <person name="Mannhaupt G."/>
            <person name="Gueldener U."/>
            <person name="Muensterkoetter M."/>
            <person name="Haase D."/>
            <person name="Oesterheld M."/>
            <person name="Mewes H.-W."/>
            <person name="Mauceli E.W."/>
            <person name="DeCaprio D."/>
            <person name="Wade C.M."/>
            <person name="Butler J."/>
            <person name="Young S.K."/>
            <person name="Jaffe D.B."/>
            <person name="Calvo S.E."/>
            <person name="Nusbaum C."/>
            <person name="Galagan J.E."/>
            <person name="Birren B.W."/>
        </authorList>
    </citation>
    <scope>NUCLEOTIDE SEQUENCE [LARGE SCALE GENOMIC DNA]</scope>
    <source>
        <strain>DSM 14603 / FGSC 9021 / UM521</strain>
    </source>
</reference>
<reference key="2">
    <citation type="submission" date="2014-09" db="EMBL/GenBank/DDBJ databases">
        <authorList>
            <person name="Gueldener U."/>
            <person name="Muensterkoetter M."/>
            <person name="Walter M.C."/>
            <person name="Mannhaupt G."/>
            <person name="Kahmann R."/>
        </authorList>
    </citation>
    <scope>GENOME REANNOTATION</scope>
    <source>
        <strain>DSM 14603 / FGSC 9021 / UM521</strain>
    </source>
</reference>
<reference key="3">
    <citation type="journal article" date="2013" name="Fungal Genet. Biol.">
        <title>Two members of the Ustilago maydis velvet family influence teliospore development and virulence on maize seedlings.</title>
        <authorList>
            <person name="Karakkat B.B."/>
            <person name="Gold S.E."/>
            <person name="Covert S.F."/>
        </authorList>
    </citation>
    <scope>FUNCTION</scope>
</reference>